<organism>
    <name type="scientific">Homo sapiens</name>
    <name type="common">Human</name>
    <dbReference type="NCBI Taxonomy" id="9606"/>
    <lineage>
        <taxon>Eukaryota</taxon>
        <taxon>Metazoa</taxon>
        <taxon>Chordata</taxon>
        <taxon>Craniata</taxon>
        <taxon>Vertebrata</taxon>
        <taxon>Euteleostomi</taxon>
        <taxon>Mammalia</taxon>
        <taxon>Eutheria</taxon>
        <taxon>Euarchontoglires</taxon>
        <taxon>Primates</taxon>
        <taxon>Haplorrhini</taxon>
        <taxon>Catarrhini</taxon>
        <taxon>Hominidae</taxon>
        <taxon>Homo</taxon>
    </lineage>
</organism>
<evidence type="ECO:0000250" key="1"/>
<evidence type="ECO:0000250" key="2">
    <source>
        <dbReference type="UniProtKB" id="Q3UHL1"/>
    </source>
</evidence>
<evidence type="ECO:0000250" key="3">
    <source>
        <dbReference type="UniProtKB" id="Q63092"/>
    </source>
</evidence>
<evidence type="ECO:0000255" key="4">
    <source>
        <dbReference type="PROSITE-ProRule" id="PRU00159"/>
    </source>
</evidence>
<evidence type="ECO:0000256" key="5">
    <source>
        <dbReference type="SAM" id="MobiDB-lite"/>
    </source>
</evidence>
<evidence type="ECO:0000269" key="6">
    <source>
    </source>
</evidence>
<evidence type="ECO:0000269" key="7">
    <source>
    </source>
</evidence>
<evidence type="ECO:0000303" key="8">
    <source>
    </source>
</evidence>
<evidence type="ECO:0000303" key="9">
    <source>
    </source>
</evidence>
<evidence type="ECO:0000303" key="10">
    <source ref="3"/>
</evidence>
<evidence type="ECO:0000305" key="11"/>
<name>CAMKV_HUMAN</name>
<feature type="chain" id="PRO_0000250094" description="CaM kinase-like vesicle-associated protein">
    <location>
        <begin position="1"/>
        <end position="501"/>
    </location>
</feature>
<feature type="domain" description="Protein kinase" evidence="4">
    <location>
        <begin position="24"/>
        <end position="286"/>
    </location>
</feature>
<feature type="region of interest" description="Disordered" evidence="5">
    <location>
        <begin position="327"/>
        <end position="501"/>
    </location>
</feature>
<feature type="compositionally biased region" description="Low complexity" evidence="5">
    <location>
        <begin position="331"/>
        <end position="365"/>
    </location>
</feature>
<feature type="compositionally biased region" description="Polar residues" evidence="5">
    <location>
        <begin position="387"/>
        <end position="428"/>
    </location>
</feature>
<feature type="compositionally biased region" description="Polar residues" evidence="5">
    <location>
        <begin position="438"/>
        <end position="451"/>
    </location>
</feature>
<feature type="modified residue" description="Phosphothreonine" evidence="3">
    <location>
        <position position="435"/>
    </location>
</feature>
<feature type="modified residue" description="Phosphothreonine" evidence="2">
    <location>
        <position position="459"/>
    </location>
</feature>
<feature type="splice variant" id="VSP_020600" description="In isoform 2." evidence="8 10">
    <location>
        <begin position="188"/>
        <end position="215"/>
    </location>
</feature>
<feature type="splice variant" id="VSP_020601" description="In isoform 3." evidence="9">
    <location>
        <begin position="352"/>
        <end position="382"/>
    </location>
</feature>
<feature type="sequence variant" id="VAR_041337" description="In a colorectal adenocarcinoma sample; somatic mutation; dbSNP:rs1407808379." evidence="7">
    <original>R</original>
    <variation>W</variation>
    <location>
        <position position="40"/>
    </location>
</feature>
<feature type="sequence variant" id="VAR_041338" description="In an ovarian serous carcinoma sample; somatic mutation; dbSNP:rs2082026503." evidence="7">
    <original>G</original>
    <variation>S</variation>
    <location>
        <position position="60"/>
    </location>
</feature>
<feature type="sequence variant" id="VAR_041339" description="In a colorectal adenocarcinoma sample; somatic mutation." evidence="7">
    <original>R</original>
    <variation>W</variation>
    <location>
        <position position="274"/>
    </location>
</feature>
<feature type="sequence variant" id="VAR_041340" description="In dbSNP:rs56071455." evidence="7">
    <original>E</original>
    <variation>D</variation>
    <location>
        <position position="279"/>
    </location>
</feature>
<feature type="sequence variant" id="VAR_041341" description="In dbSNP:rs56307047." evidence="7">
    <original>P</original>
    <variation>L</variation>
    <location>
        <position position="472"/>
    </location>
</feature>
<feature type="sequence variant" id="VAR_027539" description="In dbSNP:rs17849325." evidence="6">
    <original>Y</original>
    <variation>C</variation>
    <location>
        <position position="491"/>
    </location>
</feature>
<feature type="sequence conflict" description="In Ref. 3; CAG38539." evidence="11" ref="3">
    <original>D</original>
    <variation>G</variation>
    <location>
        <position position="22"/>
    </location>
</feature>
<feature type="sequence conflict" description="In Ref. 1; BAC11528." evidence="11" ref="1">
    <original>R</original>
    <variation>Q</variation>
    <location>
        <position position="64"/>
    </location>
</feature>
<feature type="sequence conflict" description="In Ref. 1; BAC11248." evidence="11" ref="1">
    <original>W</original>
    <variation>S</variation>
    <location>
        <position position="285"/>
    </location>
</feature>
<accession>Q8NCB2</accession>
<accession>A6NFD4</accession>
<accession>Q6FIB8</accession>
<accession>Q8NBS8</accession>
<accession>Q8NC85</accession>
<accession>Q8NDU4</accession>
<accession>Q8WTT8</accession>
<accession>Q9BQC9</accession>
<accession>Q9H0Q5</accession>
<reference key="1">
    <citation type="journal article" date="2004" name="Nat. Genet.">
        <title>Complete sequencing and characterization of 21,243 full-length human cDNAs.</title>
        <authorList>
            <person name="Ota T."/>
            <person name="Suzuki Y."/>
            <person name="Nishikawa T."/>
            <person name="Otsuki T."/>
            <person name="Sugiyama T."/>
            <person name="Irie R."/>
            <person name="Wakamatsu A."/>
            <person name="Hayashi K."/>
            <person name="Sato H."/>
            <person name="Nagai K."/>
            <person name="Kimura K."/>
            <person name="Makita H."/>
            <person name="Sekine M."/>
            <person name="Obayashi M."/>
            <person name="Nishi T."/>
            <person name="Shibahara T."/>
            <person name="Tanaka T."/>
            <person name="Ishii S."/>
            <person name="Yamamoto J."/>
            <person name="Saito K."/>
            <person name="Kawai Y."/>
            <person name="Isono Y."/>
            <person name="Nakamura Y."/>
            <person name="Nagahari K."/>
            <person name="Murakami K."/>
            <person name="Yasuda T."/>
            <person name="Iwayanagi T."/>
            <person name="Wagatsuma M."/>
            <person name="Shiratori A."/>
            <person name="Sudo H."/>
            <person name="Hosoiri T."/>
            <person name="Kaku Y."/>
            <person name="Kodaira H."/>
            <person name="Kondo H."/>
            <person name="Sugawara M."/>
            <person name="Takahashi M."/>
            <person name="Kanda K."/>
            <person name="Yokoi T."/>
            <person name="Furuya T."/>
            <person name="Kikkawa E."/>
            <person name="Omura Y."/>
            <person name="Abe K."/>
            <person name="Kamihara K."/>
            <person name="Katsuta N."/>
            <person name="Sato K."/>
            <person name="Tanikawa M."/>
            <person name="Yamazaki M."/>
            <person name="Ninomiya K."/>
            <person name="Ishibashi T."/>
            <person name="Yamashita H."/>
            <person name="Murakawa K."/>
            <person name="Fujimori K."/>
            <person name="Tanai H."/>
            <person name="Kimata M."/>
            <person name="Watanabe M."/>
            <person name="Hiraoka S."/>
            <person name="Chiba Y."/>
            <person name="Ishida S."/>
            <person name="Ono Y."/>
            <person name="Takiguchi S."/>
            <person name="Watanabe S."/>
            <person name="Yosida M."/>
            <person name="Hotuta T."/>
            <person name="Kusano J."/>
            <person name="Kanehori K."/>
            <person name="Takahashi-Fujii A."/>
            <person name="Hara H."/>
            <person name="Tanase T.-O."/>
            <person name="Nomura Y."/>
            <person name="Togiya S."/>
            <person name="Komai F."/>
            <person name="Hara R."/>
            <person name="Takeuchi K."/>
            <person name="Arita M."/>
            <person name="Imose N."/>
            <person name="Musashino K."/>
            <person name="Yuuki H."/>
            <person name="Oshima A."/>
            <person name="Sasaki N."/>
            <person name="Aotsuka S."/>
            <person name="Yoshikawa Y."/>
            <person name="Matsunawa H."/>
            <person name="Ichihara T."/>
            <person name="Shiohata N."/>
            <person name="Sano S."/>
            <person name="Moriya S."/>
            <person name="Momiyama H."/>
            <person name="Satoh N."/>
            <person name="Takami S."/>
            <person name="Terashima Y."/>
            <person name="Suzuki O."/>
            <person name="Nakagawa S."/>
            <person name="Senoh A."/>
            <person name="Mizoguchi H."/>
            <person name="Goto Y."/>
            <person name="Shimizu F."/>
            <person name="Wakebe H."/>
            <person name="Hishigaki H."/>
            <person name="Watanabe T."/>
            <person name="Sugiyama A."/>
            <person name="Takemoto M."/>
            <person name="Kawakami B."/>
            <person name="Yamazaki M."/>
            <person name="Watanabe K."/>
            <person name="Kumagai A."/>
            <person name="Itakura S."/>
            <person name="Fukuzumi Y."/>
            <person name="Fujimori Y."/>
            <person name="Komiyama M."/>
            <person name="Tashiro H."/>
            <person name="Tanigami A."/>
            <person name="Fujiwara T."/>
            <person name="Ono T."/>
            <person name="Yamada K."/>
            <person name="Fujii Y."/>
            <person name="Ozaki K."/>
            <person name="Hirao M."/>
            <person name="Ohmori Y."/>
            <person name="Kawabata A."/>
            <person name="Hikiji T."/>
            <person name="Kobatake N."/>
            <person name="Inagaki H."/>
            <person name="Ikema Y."/>
            <person name="Okamoto S."/>
            <person name="Okitani R."/>
            <person name="Kawakami T."/>
            <person name="Noguchi S."/>
            <person name="Itoh T."/>
            <person name="Shigeta K."/>
            <person name="Senba T."/>
            <person name="Matsumura K."/>
            <person name="Nakajima Y."/>
            <person name="Mizuno T."/>
            <person name="Morinaga M."/>
            <person name="Sasaki M."/>
            <person name="Togashi T."/>
            <person name="Oyama M."/>
            <person name="Hata H."/>
            <person name="Watanabe M."/>
            <person name="Komatsu T."/>
            <person name="Mizushima-Sugano J."/>
            <person name="Satoh T."/>
            <person name="Shirai Y."/>
            <person name="Takahashi Y."/>
            <person name="Nakagawa K."/>
            <person name="Okumura K."/>
            <person name="Nagase T."/>
            <person name="Nomura N."/>
            <person name="Kikuchi H."/>
            <person name="Masuho Y."/>
            <person name="Yamashita R."/>
            <person name="Nakai K."/>
            <person name="Yada T."/>
            <person name="Nakamura Y."/>
            <person name="Ohara O."/>
            <person name="Isogai T."/>
            <person name="Sugano S."/>
        </authorList>
    </citation>
    <scope>NUCLEOTIDE SEQUENCE [LARGE SCALE MRNA] (ISOFORMS 1 AND 3)</scope>
    <source>
        <tissue>Retinoblastoma</tissue>
        <tissue>Teratocarcinoma</tissue>
    </source>
</reference>
<reference key="2">
    <citation type="journal article" date="2001" name="Genome Res.">
        <title>Towards a catalog of human genes and proteins: sequencing and analysis of 500 novel complete protein coding human cDNAs.</title>
        <authorList>
            <person name="Wiemann S."/>
            <person name="Weil B."/>
            <person name="Wellenreuther R."/>
            <person name="Gassenhuber J."/>
            <person name="Glassl S."/>
            <person name="Ansorge W."/>
            <person name="Boecher M."/>
            <person name="Bloecker H."/>
            <person name="Bauersachs S."/>
            <person name="Blum H."/>
            <person name="Lauber J."/>
            <person name="Duesterhoeft A."/>
            <person name="Beyer A."/>
            <person name="Koehrer K."/>
            <person name="Strack N."/>
            <person name="Mewes H.-W."/>
            <person name="Ottenwaelder B."/>
            <person name="Obermaier B."/>
            <person name="Tampe J."/>
            <person name="Heubner D."/>
            <person name="Wambutt R."/>
            <person name="Korn B."/>
            <person name="Klein M."/>
            <person name="Poustka A."/>
        </authorList>
    </citation>
    <scope>NUCLEOTIDE SEQUENCE [LARGE SCALE MRNA] (ISOFORM 2)</scope>
    <source>
        <tissue>Brain</tissue>
    </source>
</reference>
<reference key="3">
    <citation type="submission" date="2004-06" db="EMBL/GenBank/DDBJ databases">
        <title>Cloning of human full open reading frames in Gateway(TM) system entry vector (pDONR201).</title>
        <authorList>
            <person name="Ebert L."/>
            <person name="Schick M."/>
            <person name="Neubert P."/>
            <person name="Schatten R."/>
            <person name="Henze S."/>
            <person name="Korn B."/>
        </authorList>
    </citation>
    <scope>NUCLEOTIDE SEQUENCE [LARGE SCALE MRNA] (ISOFORM 2)</scope>
</reference>
<reference key="4">
    <citation type="journal article" date="2007" name="BMC Genomics">
        <title>The full-ORF clone resource of the German cDNA consortium.</title>
        <authorList>
            <person name="Bechtel S."/>
            <person name="Rosenfelder H."/>
            <person name="Duda A."/>
            <person name="Schmidt C.P."/>
            <person name="Ernst U."/>
            <person name="Wellenreuther R."/>
            <person name="Mehrle A."/>
            <person name="Schuster C."/>
            <person name="Bahr A."/>
            <person name="Bloecker H."/>
            <person name="Heubner D."/>
            <person name="Hoerlein A."/>
            <person name="Michel G."/>
            <person name="Wedler H."/>
            <person name="Koehrer K."/>
            <person name="Ottenwaelder B."/>
            <person name="Poustka A."/>
            <person name="Wiemann S."/>
            <person name="Schupp I."/>
        </authorList>
    </citation>
    <scope>NUCLEOTIDE SEQUENCE [LARGE SCALE MRNA] (ISOFORM 1)</scope>
    <source>
        <tissue>Brain</tissue>
    </source>
</reference>
<reference key="5">
    <citation type="journal article" date="2006" name="Nature">
        <title>The DNA sequence, annotation and analysis of human chromosome 3.</title>
        <authorList>
            <person name="Muzny D.M."/>
            <person name="Scherer S.E."/>
            <person name="Kaul R."/>
            <person name="Wang J."/>
            <person name="Yu J."/>
            <person name="Sudbrak R."/>
            <person name="Buhay C.J."/>
            <person name="Chen R."/>
            <person name="Cree A."/>
            <person name="Ding Y."/>
            <person name="Dugan-Rocha S."/>
            <person name="Gill R."/>
            <person name="Gunaratne P."/>
            <person name="Harris R.A."/>
            <person name="Hawes A.C."/>
            <person name="Hernandez J."/>
            <person name="Hodgson A.V."/>
            <person name="Hume J."/>
            <person name="Jackson A."/>
            <person name="Khan Z.M."/>
            <person name="Kovar-Smith C."/>
            <person name="Lewis L.R."/>
            <person name="Lozado R.J."/>
            <person name="Metzker M.L."/>
            <person name="Milosavljevic A."/>
            <person name="Miner G.R."/>
            <person name="Morgan M.B."/>
            <person name="Nazareth L.V."/>
            <person name="Scott G."/>
            <person name="Sodergren E."/>
            <person name="Song X.-Z."/>
            <person name="Steffen D."/>
            <person name="Wei S."/>
            <person name="Wheeler D.A."/>
            <person name="Wright M.W."/>
            <person name="Worley K.C."/>
            <person name="Yuan Y."/>
            <person name="Zhang Z."/>
            <person name="Adams C.Q."/>
            <person name="Ansari-Lari M.A."/>
            <person name="Ayele M."/>
            <person name="Brown M.J."/>
            <person name="Chen G."/>
            <person name="Chen Z."/>
            <person name="Clendenning J."/>
            <person name="Clerc-Blankenburg K.P."/>
            <person name="Chen R."/>
            <person name="Chen Z."/>
            <person name="Davis C."/>
            <person name="Delgado O."/>
            <person name="Dinh H.H."/>
            <person name="Dong W."/>
            <person name="Draper H."/>
            <person name="Ernst S."/>
            <person name="Fu G."/>
            <person name="Gonzalez-Garay M.L."/>
            <person name="Garcia D.K."/>
            <person name="Gillett W."/>
            <person name="Gu J."/>
            <person name="Hao B."/>
            <person name="Haugen E."/>
            <person name="Havlak P."/>
            <person name="He X."/>
            <person name="Hennig S."/>
            <person name="Hu S."/>
            <person name="Huang W."/>
            <person name="Jackson L.R."/>
            <person name="Jacob L.S."/>
            <person name="Kelly S.H."/>
            <person name="Kube M."/>
            <person name="Levy R."/>
            <person name="Li Z."/>
            <person name="Liu B."/>
            <person name="Liu J."/>
            <person name="Liu W."/>
            <person name="Lu J."/>
            <person name="Maheshwari M."/>
            <person name="Nguyen B.-V."/>
            <person name="Okwuonu G.O."/>
            <person name="Palmeiri A."/>
            <person name="Pasternak S."/>
            <person name="Perez L.M."/>
            <person name="Phelps K.A."/>
            <person name="Plopper F.J."/>
            <person name="Qiang B."/>
            <person name="Raymond C."/>
            <person name="Rodriguez R."/>
            <person name="Saenphimmachak C."/>
            <person name="Santibanez J."/>
            <person name="Shen H."/>
            <person name="Shen Y."/>
            <person name="Subramanian S."/>
            <person name="Tabor P.E."/>
            <person name="Verduzco D."/>
            <person name="Waldron L."/>
            <person name="Wang J."/>
            <person name="Wang J."/>
            <person name="Wang Q."/>
            <person name="Williams G.A."/>
            <person name="Wong G.K.-S."/>
            <person name="Yao Z."/>
            <person name="Zhang J."/>
            <person name="Zhang X."/>
            <person name="Zhao G."/>
            <person name="Zhou J."/>
            <person name="Zhou Y."/>
            <person name="Nelson D."/>
            <person name="Lehrach H."/>
            <person name="Reinhardt R."/>
            <person name="Naylor S.L."/>
            <person name="Yang H."/>
            <person name="Olson M."/>
            <person name="Weinstock G."/>
            <person name="Gibbs R.A."/>
        </authorList>
    </citation>
    <scope>NUCLEOTIDE SEQUENCE [LARGE SCALE GENOMIC DNA]</scope>
</reference>
<reference key="6">
    <citation type="submission" date="2005-07" db="EMBL/GenBank/DDBJ databases">
        <authorList>
            <person name="Mural R.J."/>
            <person name="Istrail S."/>
            <person name="Sutton G.G."/>
            <person name="Florea L."/>
            <person name="Halpern A.L."/>
            <person name="Mobarry C.M."/>
            <person name="Lippert R."/>
            <person name="Walenz B."/>
            <person name="Shatkay H."/>
            <person name="Dew I."/>
            <person name="Miller J.R."/>
            <person name="Flanigan M.J."/>
            <person name="Edwards N.J."/>
            <person name="Bolanos R."/>
            <person name="Fasulo D."/>
            <person name="Halldorsson B.V."/>
            <person name="Hannenhalli S."/>
            <person name="Turner R."/>
            <person name="Yooseph S."/>
            <person name="Lu F."/>
            <person name="Nusskern D.R."/>
            <person name="Shue B.C."/>
            <person name="Zheng X.H."/>
            <person name="Zhong F."/>
            <person name="Delcher A.L."/>
            <person name="Huson D.H."/>
            <person name="Kravitz S.A."/>
            <person name="Mouchard L."/>
            <person name="Reinert K."/>
            <person name="Remington K.A."/>
            <person name="Clark A.G."/>
            <person name="Waterman M.S."/>
            <person name="Eichler E.E."/>
            <person name="Adams M.D."/>
            <person name="Hunkapiller M.W."/>
            <person name="Myers E.W."/>
            <person name="Venter J.C."/>
        </authorList>
    </citation>
    <scope>NUCLEOTIDE SEQUENCE [LARGE SCALE GENOMIC DNA]</scope>
</reference>
<reference key="7">
    <citation type="journal article" date="2004" name="Genome Res.">
        <title>The status, quality, and expansion of the NIH full-length cDNA project: the Mammalian Gene Collection (MGC).</title>
        <authorList>
            <consortium name="The MGC Project Team"/>
        </authorList>
    </citation>
    <scope>NUCLEOTIDE SEQUENCE [LARGE SCALE MRNA] (ISOFORM 1)</scope>
    <scope>VARIANT CYS-491</scope>
    <source>
        <tissue>Brain</tissue>
        <tissue>Lung</tissue>
    </source>
</reference>
<reference key="8">
    <citation type="journal article" date="2007" name="Nature">
        <title>Patterns of somatic mutation in human cancer genomes.</title>
        <authorList>
            <person name="Greenman C."/>
            <person name="Stephens P."/>
            <person name="Smith R."/>
            <person name="Dalgliesh G.L."/>
            <person name="Hunter C."/>
            <person name="Bignell G."/>
            <person name="Davies H."/>
            <person name="Teague J."/>
            <person name="Butler A."/>
            <person name="Stevens C."/>
            <person name="Edkins S."/>
            <person name="O'Meara S."/>
            <person name="Vastrik I."/>
            <person name="Schmidt E.E."/>
            <person name="Avis T."/>
            <person name="Barthorpe S."/>
            <person name="Bhamra G."/>
            <person name="Buck G."/>
            <person name="Choudhury B."/>
            <person name="Clements J."/>
            <person name="Cole J."/>
            <person name="Dicks E."/>
            <person name="Forbes S."/>
            <person name="Gray K."/>
            <person name="Halliday K."/>
            <person name="Harrison R."/>
            <person name="Hills K."/>
            <person name="Hinton J."/>
            <person name="Jenkinson A."/>
            <person name="Jones D."/>
            <person name="Menzies A."/>
            <person name="Mironenko T."/>
            <person name="Perry J."/>
            <person name="Raine K."/>
            <person name="Richardson D."/>
            <person name="Shepherd R."/>
            <person name="Small A."/>
            <person name="Tofts C."/>
            <person name="Varian J."/>
            <person name="Webb T."/>
            <person name="West S."/>
            <person name="Widaa S."/>
            <person name="Yates A."/>
            <person name="Cahill D.P."/>
            <person name="Louis D.N."/>
            <person name="Goldstraw P."/>
            <person name="Nicholson A.G."/>
            <person name="Brasseur F."/>
            <person name="Looijenga L."/>
            <person name="Weber B.L."/>
            <person name="Chiew Y.-E."/>
            <person name="DeFazio A."/>
            <person name="Greaves M.F."/>
            <person name="Green A.R."/>
            <person name="Campbell P."/>
            <person name="Birney E."/>
            <person name="Easton D.F."/>
            <person name="Chenevix-Trench G."/>
            <person name="Tan M.-H."/>
            <person name="Khoo S.K."/>
            <person name="Teh B.T."/>
            <person name="Yuen S.T."/>
            <person name="Leung S.Y."/>
            <person name="Wooster R."/>
            <person name="Futreal P.A."/>
            <person name="Stratton M.R."/>
        </authorList>
    </citation>
    <scope>VARIANTS [LARGE SCALE ANALYSIS] TRP-40; SER-60; TRP-274; ASP-279 AND LEU-472</scope>
</reference>
<keyword id="KW-0025">Alternative splicing</keyword>
<keyword id="KW-0112">Calmodulin-binding</keyword>
<keyword id="KW-1003">Cell membrane</keyword>
<keyword id="KW-0968">Cytoplasmic vesicle</keyword>
<keyword id="KW-0472">Membrane</keyword>
<keyword id="KW-0597">Phosphoprotein</keyword>
<keyword id="KW-1267">Proteomics identification</keyword>
<keyword id="KW-1185">Reference proteome</keyword>
<gene>
    <name type="primary">CAMKV</name>
</gene>
<proteinExistence type="evidence at protein level"/>
<protein>
    <recommendedName>
        <fullName>CaM kinase-like vesicle-associated protein</fullName>
    </recommendedName>
</protein>
<comment type="function">
    <text>Does not appear to have detectable kinase activity.</text>
</comment>
<comment type="cofactor">
    <cofactor evidence="1">
        <name>Ca(2+)</name>
        <dbReference type="ChEBI" id="CHEBI:29108"/>
    </cofactor>
</comment>
<comment type="subunit">
    <text evidence="1">Interacts with calmodulin, in the presence of calcium.</text>
</comment>
<comment type="subcellular location">
    <subcellularLocation>
        <location evidence="1">Cell membrane</location>
        <topology evidence="1">Peripheral membrane protein</topology>
    </subcellularLocation>
    <subcellularLocation>
        <location evidence="1">Cytoplasmic vesicle membrane</location>
        <topology evidence="1">Peripheral membrane protein</topology>
    </subcellularLocation>
    <text evidence="1">Predominantly observed in association with the plasma membrane of soma and in neurites, both axons and dendrites. May be associated with vesicular structures (By similarity).</text>
</comment>
<comment type="alternative products">
    <event type="alternative splicing"/>
    <isoform>
        <id>Q8NCB2-1</id>
        <name>1</name>
        <sequence type="displayed"/>
    </isoform>
    <isoform>
        <id>Q8NCB2-2</id>
        <name>2</name>
        <sequence type="described" ref="VSP_020600"/>
    </isoform>
    <isoform>
        <id>Q8NCB2-3</id>
        <name>3</name>
        <sequence type="described" ref="VSP_020601"/>
    </isoform>
</comment>
<comment type="domain">
    <text>The protein kinase domain is predicted to be catalytically inactive.</text>
</comment>
<comment type="similarity">
    <text evidence="11">Belongs to the protein kinase superfamily. CAMK Ser/Thr protein kinase family.</text>
</comment>
<dbReference type="EMBL" id="AK074856">
    <property type="protein sequence ID" value="BAC11248.1"/>
    <property type="molecule type" value="mRNA"/>
</dbReference>
<dbReference type="EMBL" id="AK074899">
    <property type="protein sequence ID" value="BAC11278.1"/>
    <property type="molecule type" value="mRNA"/>
</dbReference>
<dbReference type="EMBL" id="AK075294">
    <property type="protein sequence ID" value="BAC11528.1"/>
    <property type="molecule type" value="mRNA"/>
</dbReference>
<dbReference type="EMBL" id="AL136697">
    <property type="protein sequence ID" value="CAB66632.1"/>
    <property type="molecule type" value="mRNA"/>
</dbReference>
<dbReference type="EMBL" id="CR533508">
    <property type="protein sequence ID" value="CAG38539.1"/>
    <property type="molecule type" value="mRNA"/>
</dbReference>
<dbReference type="EMBL" id="AL833943">
    <property type="protein sequence ID" value="CAD38798.2"/>
    <property type="molecule type" value="Transcribed_RNA"/>
</dbReference>
<dbReference type="EMBL" id="AC105935">
    <property type="status" value="NOT_ANNOTATED_CDS"/>
    <property type="molecule type" value="Genomic_DNA"/>
</dbReference>
<dbReference type="EMBL" id="CH471055">
    <property type="protein sequence ID" value="EAW65027.1"/>
    <property type="molecule type" value="Genomic_DNA"/>
</dbReference>
<dbReference type="EMBL" id="BC000497">
    <property type="protein sequence ID" value="AAH00497.1"/>
    <property type="molecule type" value="mRNA"/>
</dbReference>
<dbReference type="EMBL" id="BC001921">
    <property type="protein sequence ID" value="AAH01921.1"/>
    <property type="molecule type" value="mRNA"/>
</dbReference>
<dbReference type="EMBL" id="BC005828">
    <property type="protein sequence ID" value="AAH05828.1"/>
    <property type="molecule type" value="mRNA"/>
</dbReference>
<dbReference type="EMBL" id="BC017363">
    <property type="protein sequence ID" value="AAH17363.1"/>
    <property type="molecule type" value="mRNA"/>
</dbReference>
<dbReference type="EMBL" id="BC019256">
    <property type="protein sequence ID" value="AAH19256.1"/>
    <property type="molecule type" value="mRNA"/>
</dbReference>
<dbReference type="CCDS" id="CCDS33762.1">
    <molecule id="Q8NCB2-1"/>
</dbReference>
<dbReference type="CCDS" id="CCDS82776.1">
    <molecule id="Q8NCB2-3"/>
</dbReference>
<dbReference type="RefSeq" id="NP_001307076.1">
    <molecule id="Q8NCB2-3"/>
    <property type="nucleotide sequence ID" value="NM_001320147.2"/>
</dbReference>
<dbReference type="RefSeq" id="NP_076951.2">
    <molecule id="Q8NCB2-1"/>
    <property type="nucleotide sequence ID" value="NM_024046.5"/>
</dbReference>
<dbReference type="SMR" id="Q8NCB2"/>
<dbReference type="BioGRID" id="122482">
    <property type="interactions" value="112"/>
</dbReference>
<dbReference type="FunCoup" id="Q8NCB2">
    <property type="interactions" value="552"/>
</dbReference>
<dbReference type="IntAct" id="Q8NCB2">
    <property type="interactions" value="112"/>
</dbReference>
<dbReference type="MINT" id="Q8NCB2"/>
<dbReference type="STRING" id="9606.ENSP00000419195"/>
<dbReference type="GlyCosmos" id="Q8NCB2">
    <property type="glycosylation" value="4 sites, 1 glycan"/>
</dbReference>
<dbReference type="GlyGen" id="Q8NCB2">
    <property type="glycosylation" value="6 sites, 1 O-linked glycan (5 sites)"/>
</dbReference>
<dbReference type="iPTMnet" id="Q8NCB2"/>
<dbReference type="PhosphoSitePlus" id="Q8NCB2"/>
<dbReference type="SwissPalm" id="Q8NCB2"/>
<dbReference type="BioMuta" id="CAMKV"/>
<dbReference type="DMDM" id="115311319"/>
<dbReference type="jPOST" id="Q8NCB2"/>
<dbReference type="MassIVE" id="Q8NCB2"/>
<dbReference type="PaxDb" id="9606-ENSP00000419195"/>
<dbReference type="PeptideAtlas" id="Q8NCB2"/>
<dbReference type="ProteomicsDB" id="72868">
    <molecule id="Q8NCB2-1"/>
</dbReference>
<dbReference type="ProteomicsDB" id="72869">
    <molecule id="Q8NCB2-2"/>
</dbReference>
<dbReference type="ProteomicsDB" id="72870">
    <molecule id="Q8NCB2-3"/>
</dbReference>
<dbReference type="Pumba" id="Q8NCB2"/>
<dbReference type="Antibodypedia" id="2091">
    <property type="antibodies" value="210 antibodies from 29 providers"/>
</dbReference>
<dbReference type="DNASU" id="79012"/>
<dbReference type="Ensembl" id="ENST00000296471.11">
    <molecule id="Q8NCB2-2"/>
    <property type="protein sequence ID" value="ENSP00000296471.6"/>
    <property type="gene ID" value="ENSG00000164076.17"/>
</dbReference>
<dbReference type="Ensembl" id="ENST00000477224.6">
    <molecule id="Q8NCB2-1"/>
    <property type="protein sequence ID" value="ENSP00000419195.1"/>
    <property type="gene ID" value="ENSG00000164076.17"/>
</dbReference>
<dbReference type="Ensembl" id="ENST00000488336.5">
    <molecule id="Q8NCB2-3"/>
    <property type="protein sequence ID" value="ENSP00000418809.1"/>
    <property type="gene ID" value="ENSG00000164076.17"/>
</dbReference>
<dbReference type="Ensembl" id="ENST00000620470.4">
    <molecule id="Q8NCB2-2"/>
    <property type="protein sequence ID" value="ENSP00000484045.1"/>
    <property type="gene ID" value="ENSG00000164076.17"/>
</dbReference>
<dbReference type="GeneID" id="79012"/>
<dbReference type="KEGG" id="hsa:79012"/>
<dbReference type="MANE-Select" id="ENST00000477224.6">
    <property type="protein sequence ID" value="ENSP00000419195.1"/>
    <property type="RefSeq nucleotide sequence ID" value="NM_024046.5"/>
    <property type="RefSeq protein sequence ID" value="NP_076951.2"/>
</dbReference>
<dbReference type="UCSC" id="uc003cxt.2">
    <molecule id="Q8NCB2-1"/>
    <property type="organism name" value="human"/>
</dbReference>
<dbReference type="AGR" id="HGNC:28788"/>
<dbReference type="CTD" id="79012"/>
<dbReference type="DisGeNET" id="79012"/>
<dbReference type="GeneCards" id="CAMKV"/>
<dbReference type="HGNC" id="HGNC:28788">
    <property type="gene designation" value="CAMKV"/>
</dbReference>
<dbReference type="HPA" id="ENSG00000164076">
    <property type="expression patterns" value="Tissue enriched (brain)"/>
</dbReference>
<dbReference type="MIM" id="614993">
    <property type="type" value="gene"/>
</dbReference>
<dbReference type="neXtProt" id="NX_Q8NCB2"/>
<dbReference type="OpenTargets" id="ENSG00000164076"/>
<dbReference type="PharmGKB" id="PA142672205"/>
<dbReference type="VEuPathDB" id="HostDB:ENSG00000164076"/>
<dbReference type="eggNOG" id="KOG0032">
    <property type="taxonomic scope" value="Eukaryota"/>
</dbReference>
<dbReference type="GeneTree" id="ENSGT00940000156468"/>
<dbReference type="InParanoid" id="Q8NCB2"/>
<dbReference type="OMA" id="GPATCNG"/>
<dbReference type="OrthoDB" id="40902at2759"/>
<dbReference type="PAN-GO" id="Q8NCB2">
    <property type="GO annotations" value="4 GO annotations based on evolutionary models"/>
</dbReference>
<dbReference type="PhylomeDB" id="Q8NCB2"/>
<dbReference type="TreeFam" id="TF314166"/>
<dbReference type="PathwayCommons" id="Q8NCB2"/>
<dbReference type="SignaLink" id="Q8NCB2"/>
<dbReference type="BioGRID-ORCS" id="79012">
    <property type="hits" value="19 hits in 1183 CRISPR screens"/>
</dbReference>
<dbReference type="CD-CODE" id="FB4E32DD">
    <property type="entry name" value="Presynaptic clusters and postsynaptic densities"/>
</dbReference>
<dbReference type="ChiTaRS" id="CAMKV">
    <property type="organism name" value="human"/>
</dbReference>
<dbReference type="GenomeRNAi" id="79012"/>
<dbReference type="Pharos" id="Q8NCB2">
    <property type="development level" value="Tbio"/>
</dbReference>
<dbReference type="PRO" id="PR:Q8NCB2"/>
<dbReference type="Proteomes" id="UP000005640">
    <property type="component" value="Chromosome 3"/>
</dbReference>
<dbReference type="RNAct" id="Q8NCB2">
    <property type="molecule type" value="protein"/>
</dbReference>
<dbReference type="Bgee" id="ENSG00000164076">
    <property type="expression patterns" value="Expressed in cortical plate and 100 other cell types or tissues"/>
</dbReference>
<dbReference type="ExpressionAtlas" id="Q8NCB2">
    <property type="expression patterns" value="baseline and differential"/>
</dbReference>
<dbReference type="GO" id="GO:0005737">
    <property type="term" value="C:cytoplasm"/>
    <property type="evidence" value="ECO:0000318"/>
    <property type="project" value="GO_Central"/>
</dbReference>
<dbReference type="GO" id="GO:0030659">
    <property type="term" value="C:cytoplasmic vesicle membrane"/>
    <property type="evidence" value="ECO:0007669"/>
    <property type="project" value="UniProtKB-SubCell"/>
</dbReference>
<dbReference type="GO" id="GO:0098978">
    <property type="term" value="C:glutamatergic synapse"/>
    <property type="evidence" value="ECO:0007669"/>
    <property type="project" value="Ensembl"/>
</dbReference>
<dbReference type="GO" id="GO:0005886">
    <property type="term" value="C:plasma membrane"/>
    <property type="evidence" value="ECO:0007669"/>
    <property type="project" value="UniProtKB-SubCell"/>
</dbReference>
<dbReference type="GO" id="GO:0045202">
    <property type="term" value="C:synapse"/>
    <property type="evidence" value="ECO:0000318"/>
    <property type="project" value="GO_Central"/>
</dbReference>
<dbReference type="GO" id="GO:0005524">
    <property type="term" value="F:ATP binding"/>
    <property type="evidence" value="ECO:0007669"/>
    <property type="project" value="InterPro"/>
</dbReference>
<dbReference type="GO" id="GO:0004683">
    <property type="term" value="F:calcium/calmodulin-dependent protein kinase activity"/>
    <property type="evidence" value="ECO:0000318"/>
    <property type="project" value="GO_Central"/>
</dbReference>
<dbReference type="GO" id="GO:0005516">
    <property type="term" value="F:calmodulin binding"/>
    <property type="evidence" value="ECO:0000318"/>
    <property type="project" value="GO_Central"/>
</dbReference>
<dbReference type="GO" id="GO:0050804">
    <property type="term" value="P:modulation of chemical synaptic transmission"/>
    <property type="evidence" value="ECO:0007669"/>
    <property type="project" value="Ensembl"/>
</dbReference>
<dbReference type="GO" id="GO:0099159">
    <property type="term" value="P:regulation of modification of postsynaptic structure"/>
    <property type="evidence" value="ECO:0007669"/>
    <property type="project" value="Ensembl"/>
</dbReference>
<dbReference type="GO" id="GO:0007165">
    <property type="term" value="P:signal transduction"/>
    <property type="evidence" value="ECO:0000318"/>
    <property type="project" value="GO_Central"/>
</dbReference>
<dbReference type="CDD" id="cd14088">
    <property type="entry name" value="STKc_CaMK_like"/>
    <property type="match status" value="1"/>
</dbReference>
<dbReference type="FunFam" id="1.10.510.10:FF:000188">
    <property type="entry name" value="CaM kinase-like vesicle-associated, like"/>
    <property type="match status" value="1"/>
</dbReference>
<dbReference type="FunFam" id="3.30.200.20:FF:000155">
    <property type="entry name" value="CaM kinase-like vesicle-associated, like"/>
    <property type="match status" value="1"/>
</dbReference>
<dbReference type="Gene3D" id="3.30.200.20">
    <property type="entry name" value="Phosphorylase Kinase, domain 1"/>
    <property type="match status" value="1"/>
</dbReference>
<dbReference type="Gene3D" id="1.10.510.10">
    <property type="entry name" value="Transferase(Phosphotransferase) domain 1"/>
    <property type="match status" value="1"/>
</dbReference>
<dbReference type="InterPro" id="IPR011009">
    <property type="entry name" value="Kinase-like_dom_sf"/>
</dbReference>
<dbReference type="InterPro" id="IPR000719">
    <property type="entry name" value="Prot_kinase_dom"/>
</dbReference>
<dbReference type="PANTHER" id="PTHR24347">
    <property type="entry name" value="SERINE/THREONINE-PROTEIN KINASE"/>
    <property type="match status" value="1"/>
</dbReference>
<dbReference type="Pfam" id="PF00069">
    <property type="entry name" value="Pkinase"/>
    <property type="match status" value="1"/>
</dbReference>
<dbReference type="SUPFAM" id="SSF56112">
    <property type="entry name" value="Protein kinase-like (PK-like)"/>
    <property type="match status" value="1"/>
</dbReference>
<dbReference type="PROSITE" id="PS50011">
    <property type="entry name" value="PROTEIN_KINASE_DOM"/>
    <property type="match status" value="1"/>
</dbReference>
<sequence length="501" mass="54354">MPFGCVTLGDKKNYNQPSEVTDRYDLGQVIKTEEFCEIFRAKDKTTGKLHTCKKFQKRDGRKVRKAAKNEIGILKMVKHPNILQLVDVFVTRKEYFIFLELATGREVFDWILDQGYYSERDTSNVVRQVLEAVAYLHSLKIVHRNLKLENLVYYNRLKNSKIVISDFHLAKLENGLIKEPCGTPEYLAPEVVGRQRYGRPVDCWAIGVIMYILLSGNPPFYEEVEEDDYENHDKNLFRKILAGDYEFDSPYWDDISQAAKDLVTRLMEVEQDQRITAEEAISHEWISGNAASDKNIKDGVCAQIEKNFARAKWKKAVRVTTLMKRLRAPEQSSTAAAQSASATDTATPGAAGGATAAAASGATSAPEGDAARAAKSDNVAPADRSATPATDGSATPATDGSVTPATDGSITPATDGSVTPATDRSATPATDGRATPATEESTVPTTQSSAMLATKAAATPEPAMAQPDSTAPEGATGQAPPSSKGEEAAGYAQESQREEAS</sequence>